<gene>
    <name type="primary">itprip</name>
    <name type="ORF">zgc:110677</name>
</gene>
<sequence>MQGAIARVCMVVVAAILNHPLLFPNENTTVPEQDEDLLARMKEHQEKLEAEQKRLEQEISQNETSVIGDQDGYGWYFWSALCLVIFFTIEVCRQDLISAEIPDPAEDEDGDCSTGYHSAKSIALDRGTLNNFCKTRFFPYTNESGRVREFIEGFADDLLEALRSICDLKADLEVEDFAGIGSMFESWRVSKPPTCDLIVPFSPPQPLRFQFELWCDPSTEIPLDLQGCGRIQLIKPGGNGTDCLCGSIDLGDDMLCLLHNRNECEVLEDDALPELLCARDTTYLSKGQIMRWFQISVSKAWGKISHKYDFELAFRNLDFPGALKIKFPSGKTVVLNLTPAVQFENTDAYLISHFPSDTSNSSDTHWQLSLSVYEKNLLKHLAKSLPTNSCHIHCLQIVAFLHKKQTTLTGRSAFCNYHIKTALLHLLLSKRPAMWQPQNLDSRLRDLLSFLQQSLEEKKLYHALVGNPRIPVEILVPKIIRTAEPINLYRPLVLQRHVYAKMEEHFEEMVRNTSVLVQEYTPHFSNGHVRHEFSSAEQI</sequence>
<reference key="1">
    <citation type="submission" date="2005-04" db="EMBL/GenBank/DDBJ databases">
        <authorList>
            <consortium name="NIH - Zebrafish Gene Collection (ZGC) project"/>
        </authorList>
    </citation>
    <scope>NUCLEOTIDE SEQUENCE [LARGE SCALE MRNA]</scope>
    <source>
        <tissue>Embryo</tissue>
    </source>
</reference>
<name>IPRI_DANRE</name>
<dbReference type="EMBL" id="BC092976">
    <property type="protein sequence ID" value="AAH92976.1"/>
    <property type="molecule type" value="mRNA"/>
</dbReference>
<dbReference type="RefSeq" id="NP_001017872.1">
    <property type="nucleotide sequence ID" value="NM_001017872.1"/>
</dbReference>
<dbReference type="FunCoup" id="Q567X9">
    <property type="interactions" value="1974"/>
</dbReference>
<dbReference type="STRING" id="7955.ENSDARP00000009775"/>
<dbReference type="GlyCosmos" id="Q567X9">
    <property type="glycosylation" value="2 sites, No reported glycans"/>
</dbReference>
<dbReference type="PaxDb" id="7955-ENSDARP00000009775"/>
<dbReference type="GeneID" id="550570"/>
<dbReference type="KEGG" id="dre:550570"/>
<dbReference type="AGR" id="ZFIN:ZDB-GENE-050417-422"/>
<dbReference type="CTD" id="85450"/>
<dbReference type="ZFIN" id="ZDB-GENE-050417-422">
    <property type="gene designation" value="itprip"/>
</dbReference>
<dbReference type="eggNOG" id="ENOG502QRDF">
    <property type="taxonomic scope" value="Eukaryota"/>
</dbReference>
<dbReference type="InParanoid" id="Q567X9"/>
<dbReference type="OrthoDB" id="9923553at2759"/>
<dbReference type="PhylomeDB" id="Q567X9"/>
<dbReference type="PRO" id="PR:Q567X9"/>
<dbReference type="Proteomes" id="UP000000437">
    <property type="component" value="Chromosome 13"/>
</dbReference>
<dbReference type="GO" id="GO:0016020">
    <property type="term" value="C:membrane"/>
    <property type="evidence" value="ECO:0000318"/>
    <property type="project" value="GO_Central"/>
</dbReference>
<dbReference type="GO" id="GO:0005640">
    <property type="term" value="C:nuclear outer membrane"/>
    <property type="evidence" value="ECO:0000250"/>
    <property type="project" value="UniProtKB"/>
</dbReference>
<dbReference type="GO" id="GO:0005886">
    <property type="term" value="C:plasma membrane"/>
    <property type="evidence" value="ECO:0007669"/>
    <property type="project" value="UniProtKB-SubCell"/>
</dbReference>
<dbReference type="Gene3D" id="1.10.1410.40">
    <property type="match status" value="1"/>
</dbReference>
<dbReference type="InterPro" id="IPR026250">
    <property type="entry name" value="ITPRIP-like"/>
</dbReference>
<dbReference type="InterPro" id="IPR046906">
    <property type="entry name" value="Mab-21_HhH/H2TH-like"/>
</dbReference>
<dbReference type="InterPro" id="IPR024810">
    <property type="entry name" value="MAB21L/cGLR"/>
</dbReference>
<dbReference type="PANTHER" id="PTHR10656">
    <property type="entry name" value="CELL FATE DETERMINING PROTEIN MAB21-RELATED"/>
    <property type="match status" value="1"/>
</dbReference>
<dbReference type="PANTHER" id="PTHR10656:SF8">
    <property type="entry name" value="INOSITOL 1,4,5-TRISPHOSPHATE RECEPTOR-INTERACTING PROTEIN"/>
    <property type="match status" value="1"/>
</dbReference>
<dbReference type="Pfam" id="PF20266">
    <property type="entry name" value="Mab-21_C"/>
    <property type="match status" value="1"/>
</dbReference>
<dbReference type="PRINTS" id="PR02107">
    <property type="entry name" value="INOS145TPRIP"/>
</dbReference>
<dbReference type="SMART" id="SM01265">
    <property type="entry name" value="Mab-21"/>
    <property type="match status" value="1"/>
</dbReference>
<keyword id="KW-1003">Cell membrane</keyword>
<keyword id="KW-0175">Coiled coil</keyword>
<keyword id="KW-0325">Glycoprotein</keyword>
<keyword id="KW-0472">Membrane</keyword>
<keyword id="KW-0539">Nucleus</keyword>
<keyword id="KW-1185">Reference proteome</keyword>
<keyword id="KW-0732">Signal</keyword>
<keyword id="KW-0812">Transmembrane</keyword>
<keyword id="KW-1133">Transmembrane helix</keyword>
<organism>
    <name type="scientific">Danio rerio</name>
    <name type="common">Zebrafish</name>
    <name type="synonym">Brachydanio rerio</name>
    <dbReference type="NCBI Taxonomy" id="7955"/>
    <lineage>
        <taxon>Eukaryota</taxon>
        <taxon>Metazoa</taxon>
        <taxon>Chordata</taxon>
        <taxon>Craniata</taxon>
        <taxon>Vertebrata</taxon>
        <taxon>Euteleostomi</taxon>
        <taxon>Actinopterygii</taxon>
        <taxon>Neopterygii</taxon>
        <taxon>Teleostei</taxon>
        <taxon>Ostariophysi</taxon>
        <taxon>Cypriniformes</taxon>
        <taxon>Danionidae</taxon>
        <taxon>Danioninae</taxon>
        <taxon>Danio</taxon>
    </lineage>
</organism>
<protein>
    <recommendedName>
        <fullName>Inositol 1,4,5-trisphosphate receptor-interacting protein</fullName>
    </recommendedName>
</protein>
<comment type="function">
    <text evidence="2">Enhances Ca(2+)-mediated inhibition of inositol 1,4,5-triphosphate receptor (ITPR) Ca(2+) release.</text>
</comment>
<comment type="subcellular location">
    <subcellularLocation>
        <location evidence="2">Cell membrane</location>
        <topology evidence="3">Single-pass type I membrane protein</topology>
    </subcellularLocation>
    <subcellularLocation>
        <location evidence="1">Nucleus outer membrane</location>
        <topology evidence="3">Single-pass type I membrane protein</topology>
    </subcellularLocation>
</comment>
<comment type="similarity">
    <text evidence="4">Belongs to the ITPRIP family.</text>
</comment>
<proteinExistence type="evidence at transcript level"/>
<feature type="signal peptide" evidence="3">
    <location>
        <begin position="1"/>
        <end position="24"/>
    </location>
</feature>
<feature type="chain" id="PRO_0000293730" description="Inositol 1,4,5-trisphosphate receptor-interacting protein">
    <location>
        <begin position="25"/>
        <end position="539"/>
    </location>
</feature>
<feature type="topological domain" description="Extracellular" evidence="3">
    <location>
        <begin position="25"/>
        <end position="71"/>
    </location>
</feature>
<feature type="transmembrane region" description="Helical" evidence="3">
    <location>
        <begin position="72"/>
        <end position="92"/>
    </location>
</feature>
<feature type="topological domain" description="Cytoplasmic" evidence="3">
    <location>
        <begin position="93"/>
        <end position="539"/>
    </location>
</feature>
<feature type="coiled-coil region" evidence="3">
    <location>
        <begin position="32"/>
        <end position="68"/>
    </location>
</feature>
<feature type="glycosylation site" description="N-linked (GlcNAc...) asparagine" evidence="3">
    <location>
        <position position="27"/>
    </location>
</feature>
<feature type="glycosylation site" description="N-linked (GlcNAc...) asparagine" evidence="3">
    <location>
        <position position="62"/>
    </location>
</feature>
<evidence type="ECO:0000250" key="1">
    <source>
        <dbReference type="UniProtKB" id="Q3TNL8"/>
    </source>
</evidence>
<evidence type="ECO:0000250" key="2">
    <source>
        <dbReference type="UniProtKB" id="Q8IWB1"/>
    </source>
</evidence>
<evidence type="ECO:0000255" key="3"/>
<evidence type="ECO:0000305" key="4"/>
<accession>Q567X9</accession>